<feature type="chain" id="PRO_0000093056" description="UvrABC system protein A">
    <location>
        <begin position="1"/>
        <end position="940"/>
    </location>
</feature>
<feature type="domain" description="ABC transporter 1" evidence="1">
    <location>
        <begin position="309"/>
        <end position="586"/>
    </location>
</feature>
<feature type="domain" description="ABC transporter 2" evidence="1">
    <location>
        <begin position="606"/>
        <end position="935"/>
    </location>
</feature>
<feature type="zinc finger region" description="C4-type" evidence="1">
    <location>
        <begin position="252"/>
        <end position="279"/>
    </location>
</feature>
<feature type="zinc finger region" description="C4-type" evidence="1">
    <location>
        <begin position="738"/>
        <end position="764"/>
    </location>
</feature>
<feature type="binding site" evidence="1">
    <location>
        <begin position="33"/>
        <end position="40"/>
    </location>
    <ligand>
        <name>ATP</name>
        <dbReference type="ChEBI" id="CHEBI:30616"/>
    </ligand>
</feature>
<feature type="binding site" evidence="1">
    <location>
        <begin position="639"/>
        <end position="646"/>
    </location>
    <ligand>
        <name>ATP</name>
        <dbReference type="ChEBI" id="CHEBI:30616"/>
    </ligand>
</feature>
<sequence>MPQDKIVIHGAREHNLKNIDVEIPRDKLVVVTGVSGSGKSSLAFETLYAEGQRRYVESLSAYARQFLGNMDKPDVDSIDGLSPAISIDQKTTSKNPRSTVGTVTEINDYLRLLYARVGTPYCVNGHGKISAQSVEEIVEQILELPEKTRLQILAPVVRTKKGTHVKMFERIQKDGYVRVRVDGEVYDISEVPELDKNKKHNIEIVIDRIVVKEGIRSRLFDSVEAALHQAEGYVIVDKMDGSELLFSEFYACPVCGFTVPELEPRLFSFNAPFGSCPDCDGLGVKLEPDVDLLIPDTSKTLREGAIIYWYGKASTYYPALLEQAMEQFGIDLDRPWEKLSEKEQQIVLYGNGDKLFHFLHEGDFGLRDQDMTFVGVIPNLWRRYRSGMSESAREMARSYMTELTCTTCHGYRLNDQALSVKVGEKNIAEFSILSIGDTLDYVKSLVLSANNEIIAKPILKEIKDRLTFLKNVGLDYLTLSRSSGTLSGGESQRIRLATQIGSNLSGVLYILDEPSIGLHQRDNDRLIESLQKMRDLGNTLIVVEHDEDTMMAADWLIDVGPGAGDLGGEIIASGTPKQVMKNKKSLTGQYLSGKRAIPVPEKRRAIDKKKMVKITGASENNLQNLDVEFPMGVMTAVTGVSGSGKSTLVNSILKKSLAQKLNHNSEKPGKHKKITGYEGIERLIDIDQSPIGRTPRSNPATYTSVFDDIRDLFANTNEAKIRGYKKGRFSFNVKGGRCEACSGDGIIKIEMHFLPDVYVPCEVCHGRRYNSETLEVHYKGKNISEVLDMRVSDGLEFFRHIPKIERKLQTIVDVGLGYVTLGQSATTLSGGEAQRMKLASELQKRSNGKAFYILDEPTTGLHSEDIATLIQVLDRLVEQGNTIVVIEHNLDVIKTADYIIDLGPEGGAGGGTILAKGRPEEVAKVADSYTGQYLKAKLEK</sequence>
<dbReference type="EMBL" id="AE005176">
    <property type="protein sequence ID" value="AAK05916.1"/>
    <property type="molecule type" value="Genomic_DNA"/>
</dbReference>
<dbReference type="PIR" id="B86852">
    <property type="entry name" value="B86852"/>
</dbReference>
<dbReference type="RefSeq" id="NP_267975.1">
    <property type="nucleotide sequence ID" value="NC_002662.1"/>
</dbReference>
<dbReference type="RefSeq" id="WP_003130311.1">
    <property type="nucleotide sequence ID" value="NC_002662.1"/>
</dbReference>
<dbReference type="SMR" id="Q9CEL9"/>
<dbReference type="PaxDb" id="272623-L0256"/>
<dbReference type="EnsemblBacteria" id="AAK05916">
    <property type="protein sequence ID" value="AAK05916"/>
    <property type="gene ID" value="L0256"/>
</dbReference>
<dbReference type="KEGG" id="lla:L0256"/>
<dbReference type="PATRIC" id="fig|272623.7.peg.1948"/>
<dbReference type="eggNOG" id="COG0178">
    <property type="taxonomic scope" value="Bacteria"/>
</dbReference>
<dbReference type="HOGENOM" id="CLU_001370_0_2_9"/>
<dbReference type="OrthoDB" id="9809851at2"/>
<dbReference type="Proteomes" id="UP000002196">
    <property type="component" value="Chromosome"/>
</dbReference>
<dbReference type="GO" id="GO:0005737">
    <property type="term" value="C:cytoplasm"/>
    <property type="evidence" value="ECO:0007669"/>
    <property type="project" value="UniProtKB-SubCell"/>
</dbReference>
<dbReference type="GO" id="GO:0009380">
    <property type="term" value="C:excinuclease repair complex"/>
    <property type="evidence" value="ECO:0007669"/>
    <property type="project" value="InterPro"/>
</dbReference>
<dbReference type="GO" id="GO:0005524">
    <property type="term" value="F:ATP binding"/>
    <property type="evidence" value="ECO:0007669"/>
    <property type="project" value="UniProtKB-UniRule"/>
</dbReference>
<dbReference type="GO" id="GO:0016887">
    <property type="term" value="F:ATP hydrolysis activity"/>
    <property type="evidence" value="ECO:0007669"/>
    <property type="project" value="InterPro"/>
</dbReference>
<dbReference type="GO" id="GO:0003677">
    <property type="term" value="F:DNA binding"/>
    <property type="evidence" value="ECO:0007669"/>
    <property type="project" value="UniProtKB-UniRule"/>
</dbReference>
<dbReference type="GO" id="GO:0009381">
    <property type="term" value="F:excinuclease ABC activity"/>
    <property type="evidence" value="ECO:0007669"/>
    <property type="project" value="UniProtKB-UniRule"/>
</dbReference>
<dbReference type="GO" id="GO:0008270">
    <property type="term" value="F:zinc ion binding"/>
    <property type="evidence" value="ECO:0007669"/>
    <property type="project" value="UniProtKB-UniRule"/>
</dbReference>
<dbReference type="GO" id="GO:0006289">
    <property type="term" value="P:nucleotide-excision repair"/>
    <property type="evidence" value="ECO:0007669"/>
    <property type="project" value="UniProtKB-UniRule"/>
</dbReference>
<dbReference type="GO" id="GO:0009432">
    <property type="term" value="P:SOS response"/>
    <property type="evidence" value="ECO:0007669"/>
    <property type="project" value="UniProtKB-UniRule"/>
</dbReference>
<dbReference type="CDD" id="cd03270">
    <property type="entry name" value="ABC_UvrA_I"/>
    <property type="match status" value="1"/>
</dbReference>
<dbReference type="CDD" id="cd03271">
    <property type="entry name" value="ABC_UvrA_II"/>
    <property type="match status" value="1"/>
</dbReference>
<dbReference type="FunFam" id="1.20.1580.10:FF:000002">
    <property type="entry name" value="UvrABC system protein A"/>
    <property type="match status" value="1"/>
</dbReference>
<dbReference type="Gene3D" id="1.10.8.280">
    <property type="entry name" value="ABC transporter ATPase domain-like"/>
    <property type="match status" value="1"/>
</dbReference>
<dbReference type="Gene3D" id="1.20.1580.10">
    <property type="entry name" value="ABC transporter ATPase like domain"/>
    <property type="match status" value="2"/>
</dbReference>
<dbReference type="Gene3D" id="3.30.1490.20">
    <property type="entry name" value="ATP-grasp fold, A domain"/>
    <property type="match status" value="1"/>
</dbReference>
<dbReference type="Gene3D" id="3.40.50.300">
    <property type="entry name" value="P-loop containing nucleotide triphosphate hydrolases"/>
    <property type="match status" value="2"/>
</dbReference>
<dbReference type="HAMAP" id="MF_00205">
    <property type="entry name" value="UvrA"/>
    <property type="match status" value="1"/>
</dbReference>
<dbReference type="InterPro" id="IPR003439">
    <property type="entry name" value="ABC_transporter-like_ATP-bd"/>
</dbReference>
<dbReference type="InterPro" id="IPR017871">
    <property type="entry name" value="ABC_transporter-like_CS"/>
</dbReference>
<dbReference type="InterPro" id="IPR013815">
    <property type="entry name" value="ATP_grasp_subdomain_1"/>
</dbReference>
<dbReference type="InterPro" id="IPR027417">
    <property type="entry name" value="P-loop_NTPase"/>
</dbReference>
<dbReference type="InterPro" id="IPR004602">
    <property type="entry name" value="UvrA"/>
</dbReference>
<dbReference type="InterPro" id="IPR041552">
    <property type="entry name" value="UvrA_DNA-bd"/>
</dbReference>
<dbReference type="InterPro" id="IPR041102">
    <property type="entry name" value="UvrA_inter"/>
</dbReference>
<dbReference type="NCBIfam" id="NF001503">
    <property type="entry name" value="PRK00349.1"/>
    <property type="match status" value="1"/>
</dbReference>
<dbReference type="NCBIfam" id="TIGR00630">
    <property type="entry name" value="uvra"/>
    <property type="match status" value="1"/>
</dbReference>
<dbReference type="PANTHER" id="PTHR43152">
    <property type="entry name" value="UVRABC SYSTEM PROTEIN A"/>
    <property type="match status" value="1"/>
</dbReference>
<dbReference type="PANTHER" id="PTHR43152:SF3">
    <property type="entry name" value="UVRABC SYSTEM PROTEIN A"/>
    <property type="match status" value="1"/>
</dbReference>
<dbReference type="Pfam" id="PF17755">
    <property type="entry name" value="UvrA_DNA-bind"/>
    <property type="match status" value="1"/>
</dbReference>
<dbReference type="Pfam" id="PF17760">
    <property type="entry name" value="UvrA_inter"/>
    <property type="match status" value="1"/>
</dbReference>
<dbReference type="SUPFAM" id="SSF52540">
    <property type="entry name" value="P-loop containing nucleoside triphosphate hydrolases"/>
    <property type="match status" value="3"/>
</dbReference>
<dbReference type="PROSITE" id="PS00211">
    <property type="entry name" value="ABC_TRANSPORTER_1"/>
    <property type="match status" value="2"/>
</dbReference>
<dbReference type="PROSITE" id="PS50893">
    <property type="entry name" value="ABC_TRANSPORTER_2"/>
    <property type="match status" value="2"/>
</dbReference>
<evidence type="ECO:0000255" key="1">
    <source>
        <dbReference type="HAMAP-Rule" id="MF_00205"/>
    </source>
</evidence>
<proteinExistence type="inferred from homology"/>
<reference key="1">
    <citation type="journal article" date="2001" name="Genome Res.">
        <title>The complete genome sequence of the lactic acid bacterium Lactococcus lactis ssp. lactis IL1403.</title>
        <authorList>
            <person name="Bolotin A."/>
            <person name="Wincker P."/>
            <person name="Mauger S."/>
            <person name="Jaillon O."/>
            <person name="Malarme K."/>
            <person name="Weissenbach J."/>
            <person name="Ehrlich S.D."/>
            <person name="Sorokin A."/>
        </authorList>
    </citation>
    <scope>NUCLEOTIDE SEQUENCE [LARGE SCALE GENOMIC DNA]</scope>
    <source>
        <strain>IL1403</strain>
    </source>
</reference>
<gene>
    <name evidence="1" type="primary">uvrA</name>
    <name type="ordered locus">LL1818</name>
    <name type="ORF">L0256</name>
</gene>
<organism>
    <name type="scientific">Lactococcus lactis subsp. lactis (strain IL1403)</name>
    <name type="common">Streptococcus lactis</name>
    <dbReference type="NCBI Taxonomy" id="272623"/>
    <lineage>
        <taxon>Bacteria</taxon>
        <taxon>Bacillati</taxon>
        <taxon>Bacillota</taxon>
        <taxon>Bacilli</taxon>
        <taxon>Lactobacillales</taxon>
        <taxon>Streptococcaceae</taxon>
        <taxon>Lactococcus</taxon>
    </lineage>
</organism>
<protein>
    <recommendedName>
        <fullName evidence="1">UvrABC system protein A</fullName>
        <shortName evidence="1">UvrA protein</shortName>
    </recommendedName>
    <alternativeName>
        <fullName evidence="1">Excinuclease ABC subunit A</fullName>
    </alternativeName>
</protein>
<keyword id="KW-0067">ATP-binding</keyword>
<keyword id="KW-0963">Cytoplasm</keyword>
<keyword id="KW-0227">DNA damage</keyword>
<keyword id="KW-0228">DNA excision</keyword>
<keyword id="KW-0234">DNA repair</keyword>
<keyword id="KW-0238">DNA-binding</keyword>
<keyword id="KW-0267">Excision nuclease</keyword>
<keyword id="KW-0479">Metal-binding</keyword>
<keyword id="KW-0547">Nucleotide-binding</keyword>
<keyword id="KW-1185">Reference proteome</keyword>
<keyword id="KW-0677">Repeat</keyword>
<keyword id="KW-0742">SOS response</keyword>
<keyword id="KW-0862">Zinc</keyword>
<keyword id="KW-0863">Zinc-finger</keyword>
<accession>Q9CEL9</accession>
<name>UVRA_LACLA</name>
<comment type="function">
    <text evidence="1">The UvrABC repair system catalyzes the recognition and processing of DNA lesions. UvrA is an ATPase and a DNA-binding protein. A damage recognition complex composed of 2 UvrA and 2 UvrB subunits scans DNA for abnormalities. When the presence of a lesion has been verified by UvrB, the UvrA molecules dissociate.</text>
</comment>
<comment type="subunit">
    <text evidence="1">Forms a heterotetramer with UvrB during the search for lesions.</text>
</comment>
<comment type="subcellular location">
    <subcellularLocation>
        <location evidence="1">Cytoplasm</location>
    </subcellularLocation>
</comment>
<comment type="similarity">
    <text evidence="1">Belongs to the ABC transporter superfamily. UvrA family.</text>
</comment>